<organism>
    <name type="scientific">Escherichia coli (strain SE11)</name>
    <dbReference type="NCBI Taxonomy" id="409438"/>
    <lineage>
        <taxon>Bacteria</taxon>
        <taxon>Pseudomonadati</taxon>
        <taxon>Pseudomonadota</taxon>
        <taxon>Gammaproteobacteria</taxon>
        <taxon>Enterobacterales</taxon>
        <taxon>Enterobacteriaceae</taxon>
        <taxon>Escherichia</taxon>
    </lineage>
</organism>
<gene>
    <name evidence="1" type="primary">pdxA</name>
    <name type="ordered locus">ECSE_0053</name>
</gene>
<feature type="chain" id="PRO_1000128246" description="4-hydroxythreonine-4-phosphate dehydrogenase">
    <location>
        <begin position="1"/>
        <end position="329"/>
    </location>
</feature>
<feature type="binding site" evidence="1">
    <location>
        <position position="136"/>
    </location>
    <ligand>
        <name>substrate</name>
    </ligand>
</feature>
<feature type="binding site" evidence="1">
    <location>
        <position position="137"/>
    </location>
    <ligand>
        <name>substrate</name>
    </ligand>
</feature>
<feature type="binding site" evidence="1">
    <location>
        <position position="166"/>
    </location>
    <ligand>
        <name>a divalent metal cation</name>
        <dbReference type="ChEBI" id="CHEBI:60240"/>
        <note>ligand shared between dimeric partners</note>
    </ligand>
</feature>
<feature type="binding site" evidence="1">
    <location>
        <position position="211"/>
    </location>
    <ligand>
        <name>a divalent metal cation</name>
        <dbReference type="ChEBI" id="CHEBI:60240"/>
        <note>ligand shared between dimeric partners</note>
    </ligand>
</feature>
<feature type="binding site" evidence="1">
    <location>
        <position position="266"/>
    </location>
    <ligand>
        <name>a divalent metal cation</name>
        <dbReference type="ChEBI" id="CHEBI:60240"/>
        <note>ligand shared between dimeric partners</note>
    </ligand>
</feature>
<feature type="binding site" evidence="1">
    <location>
        <position position="274"/>
    </location>
    <ligand>
        <name>substrate</name>
    </ligand>
</feature>
<feature type="binding site" evidence="1">
    <location>
        <position position="283"/>
    </location>
    <ligand>
        <name>substrate</name>
    </ligand>
</feature>
<feature type="binding site" evidence="1">
    <location>
        <position position="292"/>
    </location>
    <ligand>
        <name>substrate</name>
    </ligand>
</feature>
<evidence type="ECO:0000255" key="1">
    <source>
        <dbReference type="HAMAP-Rule" id="MF_00536"/>
    </source>
</evidence>
<sequence length="329" mass="35239">MVKTQRVVITPGEPAGIGPDLVVQLAQREWPVELVVCADTTLLTDRAAMLGLPLTLRPYSPNSPAQPQTTGTLTLLPVALRESVTAGQLAIENGHYVVETLARACDGCLNGEFAALITGPVHKGVINDAGIPFTGHTEFFEERSQAKKVVMMLATEELRVALATTHLPLRDIADAITPALLHEVIAILHHDLRTKFGIAEPRILVCGLNPHAGEGGHMGTEEIDTIIPVLDELRAQGMKLNGPLPADTLFQPKYLDNADAVLAMYHDQGLPVLKYQGFGRGVNITLGLPFIRTSVDHGTALELAGRGEADVGSFITALNLAIKMIVNTQ</sequence>
<keyword id="KW-0170">Cobalt</keyword>
<keyword id="KW-0963">Cytoplasm</keyword>
<keyword id="KW-0460">Magnesium</keyword>
<keyword id="KW-0479">Metal-binding</keyword>
<keyword id="KW-0520">NAD</keyword>
<keyword id="KW-0521">NADP</keyword>
<keyword id="KW-0560">Oxidoreductase</keyword>
<keyword id="KW-0664">Pyridoxine biosynthesis</keyword>
<keyword id="KW-0862">Zinc</keyword>
<protein>
    <recommendedName>
        <fullName evidence="1">4-hydroxythreonine-4-phosphate dehydrogenase</fullName>
        <ecNumber evidence="1">1.1.1.262</ecNumber>
    </recommendedName>
    <alternativeName>
        <fullName evidence="1">4-(phosphohydroxy)-L-threonine dehydrogenase</fullName>
    </alternativeName>
</protein>
<reference key="1">
    <citation type="journal article" date="2008" name="DNA Res.">
        <title>Complete genome sequence and comparative analysis of the wild-type commensal Escherichia coli strain SE11 isolated from a healthy adult.</title>
        <authorList>
            <person name="Oshima K."/>
            <person name="Toh H."/>
            <person name="Ogura Y."/>
            <person name="Sasamoto H."/>
            <person name="Morita H."/>
            <person name="Park S.-H."/>
            <person name="Ooka T."/>
            <person name="Iyoda S."/>
            <person name="Taylor T.D."/>
            <person name="Hayashi T."/>
            <person name="Itoh K."/>
            <person name="Hattori M."/>
        </authorList>
    </citation>
    <scope>NUCLEOTIDE SEQUENCE [LARGE SCALE GENOMIC DNA]</scope>
    <source>
        <strain>SE11</strain>
    </source>
</reference>
<comment type="function">
    <text evidence="1">Catalyzes the NAD(P)-dependent oxidation of 4-(phosphooxy)-L-threonine (HTP) into 2-amino-3-oxo-4-(phosphooxy)butyric acid which spontaneously decarboxylates to form 3-amino-2-oxopropyl phosphate (AHAP).</text>
</comment>
<comment type="catalytic activity">
    <reaction evidence="1">
        <text>4-(phosphooxy)-L-threonine + NAD(+) = 3-amino-2-oxopropyl phosphate + CO2 + NADH</text>
        <dbReference type="Rhea" id="RHEA:32275"/>
        <dbReference type="ChEBI" id="CHEBI:16526"/>
        <dbReference type="ChEBI" id="CHEBI:57279"/>
        <dbReference type="ChEBI" id="CHEBI:57540"/>
        <dbReference type="ChEBI" id="CHEBI:57945"/>
        <dbReference type="ChEBI" id="CHEBI:58452"/>
        <dbReference type="EC" id="1.1.1.262"/>
    </reaction>
</comment>
<comment type="cofactor">
    <cofactor evidence="1">
        <name>Zn(2+)</name>
        <dbReference type="ChEBI" id="CHEBI:29105"/>
    </cofactor>
    <cofactor evidence="1">
        <name>Mg(2+)</name>
        <dbReference type="ChEBI" id="CHEBI:18420"/>
    </cofactor>
    <cofactor evidence="1">
        <name>Co(2+)</name>
        <dbReference type="ChEBI" id="CHEBI:48828"/>
    </cofactor>
    <text evidence="1">Binds 1 divalent metal cation per subunit. Can use ions such as Zn(2+), Mg(2+) or Co(2+).</text>
</comment>
<comment type="pathway">
    <text evidence="1">Cofactor biosynthesis; pyridoxine 5'-phosphate biosynthesis; pyridoxine 5'-phosphate from D-erythrose 4-phosphate: step 4/5.</text>
</comment>
<comment type="subunit">
    <text evidence="1">Homodimer.</text>
</comment>
<comment type="subcellular location">
    <subcellularLocation>
        <location evidence="1">Cytoplasm</location>
    </subcellularLocation>
</comment>
<comment type="miscellaneous">
    <text evidence="1">The active site is located at the dimer interface.</text>
</comment>
<comment type="similarity">
    <text evidence="1">Belongs to the PdxA family.</text>
</comment>
<dbReference type="EC" id="1.1.1.262" evidence="1"/>
<dbReference type="EMBL" id="AP009240">
    <property type="protein sequence ID" value="BAG75577.1"/>
    <property type="molecule type" value="Genomic_DNA"/>
</dbReference>
<dbReference type="RefSeq" id="WP_000241282.1">
    <property type="nucleotide sequence ID" value="NC_011415.1"/>
</dbReference>
<dbReference type="SMR" id="B6HZ33"/>
<dbReference type="KEGG" id="ecy:ECSE_0053"/>
<dbReference type="HOGENOM" id="CLU_040168_1_0_6"/>
<dbReference type="UniPathway" id="UPA00244">
    <property type="reaction ID" value="UER00312"/>
</dbReference>
<dbReference type="Proteomes" id="UP000008199">
    <property type="component" value="Chromosome"/>
</dbReference>
<dbReference type="GO" id="GO:0005737">
    <property type="term" value="C:cytoplasm"/>
    <property type="evidence" value="ECO:0007669"/>
    <property type="project" value="UniProtKB-SubCell"/>
</dbReference>
<dbReference type="GO" id="GO:0050570">
    <property type="term" value="F:4-hydroxythreonine-4-phosphate dehydrogenase activity"/>
    <property type="evidence" value="ECO:0007669"/>
    <property type="project" value="UniProtKB-UniRule"/>
</dbReference>
<dbReference type="GO" id="GO:0050897">
    <property type="term" value="F:cobalt ion binding"/>
    <property type="evidence" value="ECO:0007669"/>
    <property type="project" value="UniProtKB-UniRule"/>
</dbReference>
<dbReference type="GO" id="GO:0000287">
    <property type="term" value="F:magnesium ion binding"/>
    <property type="evidence" value="ECO:0007669"/>
    <property type="project" value="UniProtKB-UniRule"/>
</dbReference>
<dbReference type="GO" id="GO:0051287">
    <property type="term" value="F:NAD binding"/>
    <property type="evidence" value="ECO:0007669"/>
    <property type="project" value="InterPro"/>
</dbReference>
<dbReference type="GO" id="GO:0008270">
    <property type="term" value="F:zinc ion binding"/>
    <property type="evidence" value="ECO:0007669"/>
    <property type="project" value="UniProtKB-UniRule"/>
</dbReference>
<dbReference type="GO" id="GO:0042823">
    <property type="term" value="P:pyridoxal phosphate biosynthetic process"/>
    <property type="evidence" value="ECO:0007669"/>
    <property type="project" value="UniProtKB-UniRule"/>
</dbReference>
<dbReference type="GO" id="GO:0008615">
    <property type="term" value="P:pyridoxine biosynthetic process"/>
    <property type="evidence" value="ECO:0007669"/>
    <property type="project" value="UniProtKB-UniRule"/>
</dbReference>
<dbReference type="FunFam" id="3.40.718.10:FF:000010">
    <property type="entry name" value="4-hydroxythreonine-4-phosphate dehydrogenase"/>
    <property type="match status" value="1"/>
</dbReference>
<dbReference type="Gene3D" id="3.40.718.10">
    <property type="entry name" value="Isopropylmalate Dehydrogenase"/>
    <property type="match status" value="1"/>
</dbReference>
<dbReference type="HAMAP" id="MF_00536">
    <property type="entry name" value="PdxA"/>
    <property type="match status" value="1"/>
</dbReference>
<dbReference type="InterPro" id="IPR037510">
    <property type="entry name" value="PdxA"/>
</dbReference>
<dbReference type="InterPro" id="IPR005255">
    <property type="entry name" value="PdxA_fam"/>
</dbReference>
<dbReference type="NCBIfam" id="TIGR00557">
    <property type="entry name" value="pdxA"/>
    <property type="match status" value="1"/>
</dbReference>
<dbReference type="PANTHER" id="PTHR30004">
    <property type="entry name" value="4-HYDROXYTHREONINE-4-PHOSPHATE DEHYDROGENASE"/>
    <property type="match status" value="1"/>
</dbReference>
<dbReference type="PANTHER" id="PTHR30004:SF5">
    <property type="entry name" value="4-HYDROXYTHREONINE-4-PHOSPHATE DEHYDROGENASE"/>
    <property type="match status" value="1"/>
</dbReference>
<dbReference type="Pfam" id="PF04166">
    <property type="entry name" value="PdxA"/>
    <property type="match status" value="1"/>
</dbReference>
<dbReference type="SUPFAM" id="SSF53659">
    <property type="entry name" value="Isocitrate/Isopropylmalate dehydrogenase-like"/>
    <property type="match status" value="1"/>
</dbReference>
<name>PDXA_ECOSE</name>
<accession>B6HZ33</accession>
<proteinExistence type="inferred from homology"/>